<protein>
    <recommendedName>
        <fullName>UTP--glucose-1-phosphate uridylyltransferase AglF</fullName>
        <ecNumber>2.7.7.9</ecNumber>
    </recommendedName>
    <alternativeName>
        <fullName>Archaeal glycosylation protein F</fullName>
    </alternativeName>
</protein>
<feature type="chain" id="PRO_0000415423" description="UTP--glucose-1-phosphate uridylyltransferase AglF">
    <location>
        <begin position="1"/>
        <end position="243"/>
    </location>
</feature>
<accession>D4GYH1</accession>
<accession>B2G4W5</accession>
<dbReference type="EC" id="2.7.7.9"/>
<dbReference type="EMBL" id="AM991128">
    <property type="protein sequence ID" value="CAQ51229.1"/>
    <property type="molecule type" value="Genomic_DNA"/>
</dbReference>
<dbReference type="EMBL" id="CP001956">
    <property type="protein sequence ID" value="ADE04323.1"/>
    <property type="molecule type" value="Genomic_DNA"/>
</dbReference>
<dbReference type="RefSeq" id="WP_004041405.1">
    <property type="nucleotide sequence ID" value="NC_013967.1"/>
</dbReference>
<dbReference type="SMR" id="D4GYH1"/>
<dbReference type="STRING" id="309800.HVO_1527"/>
<dbReference type="PaxDb" id="309800-C498_02990"/>
<dbReference type="EnsemblBacteria" id="ADE04323">
    <property type="protein sequence ID" value="ADE04323"/>
    <property type="gene ID" value="HVO_1527"/>
</dbReference>
<dbReference type="GeneID" id="8924609"/>
<dbReference type="KEGG" id="hvo:HVO_1527"/>
<dbReference type="eggNOG" id="arCOG00664">
    <property type="taxonomic scope" value="Archaea"/>
</dbReference>
<dbReference type="HOGENOM" id="CLU_029499_2_0_2"/>
<dbReference type="OrthoDB" id="15372at2157"/>
<dbReference type="BioCyc" id="MetaCyc:MONOMER-19292"/>
<dbReference type="UniPathway" id="UPA00977"/>
<dbReference type="Proteomes" id="UP000008243">
    <property type="component" value="Chromosome"/>
</dbReference>
<dbReference type="GO" id="GO:0003983">
    <property type="term" value="F:UTP:glucose-1-phosphate uridylyltransferase activity"/>
    <property type="evidence" value="ECO:0007669"/>
    <property type="project" value="UniProtKB-EC"/>
</dbReference>
<dbReference type="GO" id="GO:0009058">
    <property type="term" value="P:biosynthetic process"/>
    <property type="evidence" value="ECO:0007669"/>
    <property type="project" value="InterPro"/>
</dbReference>
<dbReference type="GO" id="GO:0045232">
    <property type="term" value="P:S-layer organization"/>
    <property type="evidence" value="ECO:0007669"/>
    <property type="project" value="UniProtKB-UniPathway"/>
</dbReference>
<dbReference type="CDD" id="cd04181">
    <property type="entry name" value="NTP_transferase"/>
    <property type="match status" value="1"/>
</dbReference>
<dbReference type="Gene3D" id="3.90.550.10">
    <property type="entry name" value="Spore Coat Polysaccharide Biosynthesis Protein SpsA, Chain A"/>
    <property type="match status" value="1"/>
</dbReference>
<dbReference type="InterPro" id="IPR053799">
    <property type="entry name" value="AglF-like"/>
</dbReference>
<dbReference type="InterPro" id="IPR050065">
    <property type="entry name" value="GlmU-like"/>
</dbReference>
<dbReference type="InterPro" id="IPR005835">
    <property type="entry name" value="NTP_transferase_dom"/>
</dbReference>
<dbReference type="InterPro" id="IPR029044">
    <property type="entry name" value="Nucleotide-diphossugar_trans"/>
</dbReference>
<dbReference type="NCBIfam" id="NF041313">
    <property type="entry name" value="UDPGP_AglF_Halo"/>
    <property type="match status" value="1"/>
</dbReference>
<dbReference type="PANTHER" id="PTHR43584:SF8">
    <property type="entry name" value="N-ACETYLMURAMATE ALPHA-1-PHOSPHATE URIDYLYLTRANSFERASE"/>
    <property type="match status" value="1"/>
</dbReference>
<dbReference type="PANTHER" id="PTHR43584">
    <property type="entry name" value="NUCLEOTIDYL TRANSFERASE"/>
    <property type="match status" value="1"/>
</dbReference>
<dbReference type="Pfam" id="PF00483">
    <property type="entry name" value="NTP_transferase"/>
    <property type="match status" value="1"/>
</dbReference>
<dbReference type="SUPFAM" id="SSF53448">
    <property type="entry name" value="Nucleotide-diphospho-sugar transferases"/>
    <property type="match status" value="1"/>
</dbReference>
<reference key="1">
    <citation type="journal article" date="2008" name="Mol. Microbiol.">
        <title>AglF, aglG and aglI, novel members of a gene island involved in the N-glycosylation of the Haloferax volcanii S-layer glycoprotein.</title>
        <authorList>
            <person name="Yurist-Doutsch S."/>
            <person name="Abu-Qarn M."/>
            <person name="Battaglia F."/>
            <person name="Morris H.R."/>
            <person name="Hitchen P.G."/>
            <person name="Dell A."/>
            <person name="Eichler J."/>
        </authorList>
    </citation>
    <scope>NUCLEOTIDE SEQUENCE [GENOMIC DNA]</scope>
    <scope>FUNCTION IN GLYCOSYLATION</scope>
    <scope>GENE NAME</scope>
    <source>
        <strain>DS2 / DS70</strain>
    </source>
</reference>
<reference key="2">
    <citation type="journal article" date="2010" name="PLoS ONE">
        <title>The complete genome sequence of Haloferax volcanii DS2, a model archaeon.</title>
        <authorList>
            <person name="Hartman A.L."/>
            <person name="Norais C."/>
            <person name="Badger J.H."/>
            <person name="Delmas S."/>
            <person name="Haldenby S."/>
            <person name="Madupu R."/>
            <person name="Robinson J."/>
            <person name="Khouri H."/>
            <person name="Ren Q."/>
            <person name="Lowe T.M."/>
            <person name="Maupin-Furlow J."/>
            <person name="Pohlschroder M."/>
            <person name="Daniels C."/>
            <person name="Pfeiffer F."/>
            <person name="Allers T."/>
            <person name="Eisen J.A."/>
        </authorList>
    </citation>
    <scope>NUCLEOTIDE SEQUENCE [LARGE SCALE GENOMIC DNA]</scope>
    <source>
        <strain>ATCC 29605 / DSM 3757 / JCM 8879 / NBRC 14742 / NCIMB 2012 / VKM B-1768 / DS2</strain>
    </source>
</reference>
<reference key="3">
    <citation type="journal article" date="2010" name="Mol. Microbiol.">
        <title>N-glycosylation in Archaea: on the coordinated actions of Haloferax volcanii AglF and AglM.</title>
        <authorList>
            <person name="Yurist-Doutsch S."/>
            <person name="Magidovich H."/>
            <person name="Ventura V.V."/>
            <person name="Hitchen P.G."/>
            <person name="Dell A."/>
            <person name="Eichler J."/>
        </authorList>
    </citation>
    <scope>FUNCTION</scope>
    <scope>CATALYTIC ACTIVITY</scope>
    <scope>PATHWAY</scope>
    <source>
        <strain>DS2 / DS70</strain>
    </source>
</reference>
<reference key="4">
    <citation type="journal article" date="2012" name="J. Bacteriol.">
        <title>N-glycosylation of Haloferax volcanii flagellins requires known Agl proteins and is essential for biosynthesis of stable flagella.</title>
        <authorList>
            <person name="Tripepi M."/>
            <person name="You J."/>
            <person name="Temel S."/>
            <person name="Onder O."/>
            <person name="Brisson D."/>
            <person name="Pohlschroder M."/>
        </authorList>
    </citation>
    <scope>FUNCTION IN GLYCOSYLATION OF FLAGELLINS</scope>
    <scope>DISRUPTION PHENOTYPE</scope>
    <source>
        <strain>H53</strain>
    </source>
</reference>
<evidence type="ECO:0000269" key="1">
    <source>
    </source>
</evidence>
<evidence type="ECO:0000269" key="2">
    <source>
    </source>
</evidence>
<evidence type="ECO:0000269" key="3">
    <source>
    </source>
</evidence>
<evidence type="ECO:0000305" key="4"/>
<comment type="function">
    <text evidence="1 2 3">Involved in the assembly of a N-linked pentasaccharide that decorates the S-layer glycoprotein and flagellins. Involved in the biosynthesis of the hexuronic acid found at position 3 of the pentasaccharide.</text>
</comment>
<comment type="catalytic activity">
    <reaction evidence="2">
        <text>alpha-D-glucose 1-phosphate + UTP + H(+) = UDP-alpha-D-glucose + diphosphate</text>
        <dbReference type="Rhea" id="RHEA:19889"/>
        <dbReference type="ChEBI" id="CHEBI:15378"/>
        <dbReference type="ChEBI" id="CHEBI:33019"/>
        <dbReference type="ChEBI" id="CHEBI:46398"/>
        <dbReference type="ChEBI" id="CHEBI:58601"/>
        <dbReference type="ChEBI" id="CHEBI:58885"/>
        <dbReference type="EC" id="2.7.7.9"/>
    </reaction>
</comment>
<comment type="pathway">
    <text evidence="2">Cell surface structure biogenesis; S-layer biogenesis.</text>
</comment>
<comment type="disruption phenotype">
    <text evidence="3">Mutants exhibit defective or limited motility.</text>
</comment>
<comment type="similarity">
    <text evidence="4">Belongs to the UDPGP type 2 family.</text>
</comment>
<gene>
    <name type="primary">aglF</name>
    <name type="ordered locus">HVO_1527</name>
</gene>
<proteinExistence type="evidence at protein level"/>
<name>AGLF_HALVD</name>
<keyword id="KW-0548">Nucleotidyltransferase</keyword>
<keyword id="KW-1185">Reference proteome</keyword>
<keyword id="KW-0808">Transferase</keyword>
<sequence length="243" mass="27535">MQAVVLAAGKGTRLRPLTEDKPKGMVEVDGKPILTHCFDQLVDLGAEKLVVVVGYKKEIIIQHYDDEYRGVPITYAHQREQKGLAHALLTVEDHIDEDFMLMLGDNIFNANLGDVVKRQREDRADAAFLVEEVDWDEASRYGVCVTNDYGEITEVIEKPEEPPSNLVMTGFYTFTPAIFHACHLVQPSNRGEYEISEAIDLLIRSGRTIDAIRIDGWRLDIGYPEDRDEAEQRLQEETTQATE</sequence>
<organism>
    <name type="scientific">Haloferax volcanii (strain ATCC 29605 / DSM 3757 / JCM 8879 / NBRC 14742 / NCIMB 2012 / VKM B-1768 / DS2)</name>
    <name type="common">Halobacterium volcanii</name>
    <dbReference type="NCBI Taxonomy" id="309800"/>
    <lineage>
        <taxon>Archaea</taxon>
        <taxon>Methanobacteriati</taxon>
        <taxon>Methanobacteriota</taxon>
        <taxon>Stenosarchaea group</taxon>
        <taxon>Halobacteria</taxon>
        <taxon>Halobacteriales</taxon>
        <taxon>Haloferacaceae</taxon>
        <taxon>Haloferax</taxon>
    </lineage>
</organism>